<comment type="function">
    <text evidence="1">Component of the ESCRT-0 complex which is the sorting receptor for ubiquitinated cargo proteins at the multivesicular body (MVB).</text>
</comment>
<comment type="subunit">
    <text evidence="1">Component of the ESCRT-0 complex composed of HSE1 and VPS27.</text>
</comment>
<comment type="subcellular location">
    <subcellularLocation>
        <location evidence="1">Endosome membrane</location>
        <topology evidence="1">Peripheral membrane protein</topology>
        <orientation evidence="1">Cytoplasmic side</orientation>
    </subcellularLocation>
</comment>
<comment type="similarity">
    <text evidence="5">Belongs to the STAM family.</text>
</comment>
<organism>
    <name type="scientific">Aspergillus niger (strain ATCC MYA-4892 / CBS 513.88 / FGSC A1513)</name>
    <dbReference type="NCBI Taxonomy" id="425011"/>
    <lineage>
        <taxon>Eukaryota</taxon>
        <taxon>Fungi</taxon>
        <taxon>Dikarya</taxon>
        <taxon>Ascomycota</taxon>
        <taxon>Pezizomycotina</taxon>
        <taxon>Eurotiomycetes</taxon>
        <taxon>Eurotiomycetidae</taxon>
        <taxon>Eurotiales</taxon>
        <taxon>Aspergillaceae</taxon>
        <taxon>Aspergillus</taxon>
        <taxon>Aspergillus subgen. Circumdati</taxon>
    </lineage>
</organism>
<gene>
    <name type="primary">hse1</name>
    <name type="ORF">An11g04310</name>
</gene>
<keyword id="KW-0967">Endosome</keyword>
<keyword id="KW-0472">Membrane</keyword>
<keyword id="KW-0653">Protein transport</keyword>
<keyword id="KW-1185">Reference proteome</keyword>
<keyword id="KW-0728">SH3 domain</keyword>
<keyword id="KW-0813">Transport</keyword>
<dbReference type="EMBL" id="AM270233">
    <property type="protein sequence ID" value="CAK40663.1"/>
    <property type="molecule type" value="Genomic_DNA"/>
</dbReference>
<dbReference type="RefSeq" id="XP_001394426.1">
    <property type="nucleotide sequence ID" value="XM_001394389.2"/>
</dbReference>
<dbReference type="SMR" id="A2QW93"/>
<dbReference type="EnsemblFungi" id="CAK40663">
    <property type="protein sequence ID" value="CAK40663"/>
    <property type="gene ID" value="An11g04310"/>
</dbReference>
<dbReference type="GeneID" id="4984662"/>
<dbReference type="KEGG" id="ang:An11g04310"/>
<dbReference type="HOGENOM" id="CLU_010104_1_1_1"/>
<dbReference type="Proteomes" id="UP000006706">
    <property type="component" value="Chromosome 7R"/>
</dbReference>
<dbReference type="GO" id="GO:0010008">
    <property type="term" value="C:endosome membrane"/>
    <property type="evidence" value="ECO:0007669"/>
    <property type="project" value="UniProtKB-SubCell"/>
</dbReference>
<dbReference type="GO" id="GO:0033565">
    <property type="term" value="C:ESCRT-0 complex"/>
    <property type="evidence" value="ECO:0007669"/>
    <property type="project" value="TreeGrafter"/>
</dbReference>
<dbReference type="GO" id="GO:0035091">
    <property type="term" value="F:phosphatidylinositol binding"/>
    <property type="evidence" value="ECO:0007669"/>
    <property type="project" value="InterPro"/>
</dbReference>
<dbReference type="GO" id="GO:0043130">
    <property type="term" value="F:ubiquitin binding"/>
    <property type="evidence" value="ECO:0007669"/>
    <property type="project" value="InterPro"/>
</dbReference>
<dbReference type="GO" id="GO:0043328">
    <property type="term" value="P:protein transport to vacuole involved in ubiquitin-dependent protein catabolic process via the multivesicular body sorting pathway"/>
    <property type="evidence" value="ECO:0007669"/>
    <property type="project" value="TreeGrafter"/>
</dbReference>
<dbReference type="CDD" id="cd21386">
    <property type="entry name" value="GAT_Hse1"/>
    <property type="match status" value="1"/>
</dbReference>
<dbReference type="CDD" id="cd11805">
    <property type="entry name" value="SH3_GRB2_like_C"/>
    <property type="match status" value="1"/>
</dbReference>
<dbReference type="CDD" id="cd16978">
    <property type="entry name" value="VHS_HSE1"/>
    <property type="match status" value="1"/>
</dbReference>
<dbReference type="FunFam" id="2.30.30.40:FF:000072">
    <property type="entry name" value="Unconventional Myosin IB"/>
    <property type="match status" value="1"/>
</dbReference>
<dbReference type="Gene3D" id="1.20.5.1940">
    <property type="match status" value="1"/>
</dbReference>
<dbReference type="Gene3D" id="1.25.40.90">
    <property type="match status" value="1"/>
</dbReference>
<dbReference type="Gene3D" id="2.30.30.40">
    <property type="entry name" value="SH3 Domains"/>
    <property type="match status" value="1"/>
</dbReference>
<dbReference type="InterPro" id="IPR008942">
    <property type="entry name" value="ENTH_VHS"/>
</dbReference>
<dbReference type="InterPro" id="IPR004152">
    <property type="entry name" value="GAT_dom"/>
</dbReference>
<dbReference type="InterPro" id="IPR036028">
    <property type="entry name" value="SH3-like_dom_sf"/>
</dbReference>
<dbReference type="InterPro" id="IPR001452">
    <property type="entry name" value="SH3_domain"/>
</dbReference>
<dbReference type="InterPro" id="IPR050670">
    <property type="entry name" value="STAM"/>
</dbReference>
<dbReference type="InterPro" id="IPR002014">
    <property type="entry name" value="VHS_dom"/>
</dbReference>
<dbReference type="PANTHER" id="PTHR45929">
    <property type="entry name" value="JAK PATHWAY SIGNAL TRANSDUCTION ADAPTOR MOLECULE"/>
    <property type="match status" value="1"/>
</dbReference>
<dbReference type="PANTHER" id="PTHR45929:SF3">
    <property type="entry name" value="JAK PATHWAY SIGNAL TRANSDUCTION ADAPTOR MOLECULE"/>
    <property type="match status" value="1"/>
</dbReference>
<dbReference type="Pfam" id="PF03127">
    <property type="entry name" value="GAT"/>
    <property type="match status" value="1"/>
</dbReference>
<dbReference type="Pfam" id="PF00018">
    <property type="entry name" value="SH3_1"/>
    <property type="match status" value="1"/>
</dbReference>
<dbReference type="Pfam" id="PF00790">
    <property type="entry name" value="VHS"/>
    <property type="match status" value="1"/>
</dbReference>
<dbReference type="PRINTS" id="PR00452">
    <property type="entry name" value="SH3DOMAIN"/>
</dbReference>
<dbReference type="PRINTS" id="PR01887">
    <property type="entry name" value="SPECTRNALPHA"/>
</dbReference>
<dbReference type="SMART" id="SM00326">
    <property type="entry name" value="SH3"/>
    <property type="match status" value="1"/>
</dbReference>
<dbReference type="SMART" id="SM00288">
    <property type="entry name" value="VHS"/>
    <property type="match status" value="1"/>
</dbReference>
<dbReference type="SUPFAM" id="SSF48464">
    <property type="entry name" value="ENTH/VHS domain"/>
    <property type="match status" value="1"/>
</dbReference>
<dbReference type="SUPFAM" id="SSF50044">
    <property type="entry name" value="SH3-domain"/>
    <property type="match status" value="1"/>
</dbReference>
<dbReference type="PROSITE" id="PS50002">
    <property type="entry name" value="SH3"/>
    <property type="match status" value="1"/>
</dbReference>
<dbReference type="PROSITE" id="PS50179">
    <property type="entry name" value="VHS"/>
    <property type="match status" value="1"/>
</dbReference>
<accession>A2QW93</accession>
<protein>
    <recommendedName>
        <fullName>Class E vacuolar protein-sorting machinery protein hse1</fullName>
    </recommendedName>
</protein>
<evidence type="ECO:0000250" key="1"/>
<evidence type="ECO:0000255" key="2">
    <source>
        <dbReference type="PROSITE-ProRule" id="PRU00192"/>
    </source>
</evidence>
<evidence type="ECO:0000255" key="3">
    <source>
        <dbReference type="PROSITE-ProRule" id="PRU00218"/>
    </source>
</evidence>
<evidence type="ECO:0000256" key="4">
    <source>
        <dbReference type="SAM" id="MobiDB-lite"/>
    </source>
</evidence>
<evidence type="ECO:0000305" key="5"/>
<proteinExistence type="inferred from homology"/>
<feature type="chain" id="PRO_0000292488" description="Class E vacuolar protein-sorting machinery protein hse1">
    <location>
        <begin position="1"/>
        <end position="611"/>
    </location>
</feature>
<feature type="domain" description="VHS" evidence="3">
    <location>
        <begin position="16"/>
        <end position="145"/>
    </location>
</feature>
<feature type="domain" description="UIM" evidence="5">
    <location>
        <begin position="162"/>
        <end position="181"/>
    </location>
</feature>
<feature type="domain" description="SH3" evidence="2">
    <location>
        <begin position="216"/>
        <end position="275"/>
    </location>
</feature>
<feature type="region of interest" description="Disordered" evidence="4">
    <location>
        <begin position="140"/>
        <end position="163"/>
    </location>
</feature>
<feature type="region of interest" description="Disordered" evidence="4">
    <location>
        <begin position="182"/>
        <end position="211"/>
    </location>
</feature>
<feature type="region of interest" description="Disordered" evidence="4">
    <location>
        <begin position="373"/>
        <end position="611"/>
    </location>
</feature>
<feature type="compositionally biased region" description="Basic and acidic residues" evidence="4">
    <location>
        <begin position="151"/>
        <end position="163"/>
    </location>
</feature>
<feature type="compositionally biased region" description="Low complexity" evidence="4">
    <location>
        <begin position="182"/>
        <end position="195"/>
    </location>
</feature>
<feature type="compositionally biased region" description="Polar residues" evidence="4">
    <location>
        <begin position="196"/>
        <end position="211"/>
    </location>
</feature>
<feature type="compositionally biased region" description="Low complexity" evidence="4">
    <location>
        <begin position="388"/>
        <end position="397"/>
    </location>
</feature>
<feature type="compositionally biased region" description="Low complexity" evidence="4">
    <location>
        <begin position="452"/>
        <end position="472"/>
    </location>
</feature>
<feature type="compositionally biased region" description="Polar residues" evidence="4">
    <location>
        <begin position="480"/>
        <end position="492"/>
    </location>
</feature>
<feature type="compositionally biased region" description="Low complexity" evidence="4">
    <location>
        <begin position="509"/>
        <end position="534"/>
    </location>
</feature>
<feature type="compositionally biased region" description="Pro residues" evidence="4">
    <location>
        <begin position="558"/>
        <end position="575"/>
    </location>
</feature>
<feature type="compositionally biased region" description="Polar residues" evidence="4">
    <location>
        <begin position="596"/>
        <end position="611"/>
    </location>
</feature>
<name>HSE1_ASPNC</name>
<reference key="1">
    <citation type="journal article" date="2007" name="Nat. Biotechnol.">
        <title>Genome sequencing and analysis of the versatile cell factory Aspergillus niger CBS 513.88.</title>
        <authorList>
            <person name="Pel H.J."/>
            <person name="de Winde J.H."/>
            <person name="Archer D.B."/>
            <person name="Dyer P.S."/>
            <person name="Hofmann G."/>
            <person name="Schaap P.J."/>
            <person name="Turner G."/>
            <person name="de Vries R.P."/>
            <person name="Albang R."/>
            <person name="Albermann K."/>
            <person name="Andersen M.R."/>
            <person name="Bendtsen J.D."/>
            <person name="Benen J.A.E."/>
            <person name="van den Berg M."/>
            <person name="Breestraat S."/>
            <person name="Caddick M.X."/>
            <person name="Contreras R."/>
            <person name="Cornell M."/>
            <person name="Coutinho P.M."/>
            <person name="Danchin E.G.J."/>
            <person name="Debets A.J.M."/>
            <person name="Dekker P."/>
            <person name="van Dijck P.W.M."/>
            <person name="van Dijk A."/>
            <person name="Dijkhuizen L."/>
            <person name="Driessen A.J.M."/>
            <person name="d'Enfert C."/>
            <person name="Geysens S."/>
            <person name="Goosen C."/>
            <person name="Groot G.S.P."/>
            <person name="de Groot P.W.J."/>
            <person name="Guillemette T."/>
            <person name="Henrissat B."/>
            <person name="Herweijer M."/>
            <person name="van den Hombergh J.P.T.W."/>
            <person name="van den Hondel C.A.M.J.J."/>
            <person name="van der Heijden R.T.J.M."/>
            <person name="van der Kaaij R.M."/>
            <person name="Klis F.M."/>
            <person name="Kools H.J."/>
            <person name="Kubicek C.P."/>
            <person name="van Kuyk P.A."/>
            <person name="Lauber J."/>
            <person name="Lu X."/>
            <person name="van der Maarel M.J.E.C."/>
            <person name="Meulenberg R."/>
            <person name="Menke H."/>
            <person name="Mortimer M.A."/>
            <person name="Nielsen J."/>
            <person name="Oliver S.G."/>
            <person name="Olsthoorn M."/>
            <person name="Pal K."/>
            <person name="van Peij N.N.M.E."/>
            <person name="Ram A.F.J."/>
            <person name="Rinas U."/>
            <person name="Roubos J.A."/>
            <person name="Sagt C.M.J."/>
            <person name="Schmoll M."/>
            <person name="Sun J."/>
            <person name="Ussery D."/>
            <person name="Varga J."/>
            <person name="Vervecken W."/>
            <person name="van de Vondervoort P.J.J."/>
            <person name="Wedler H."/>
            <person name="Woesten H.A.B."/>
            <person name="Zeng A.-P."/>
            <person name="van Ooyen A.J.J."/>
            <person name="Visser J."/>
            <person name="Stam H."/>
        </authorList>
    </citation>
    <scope>NUCLEOTIDE SEQUENCE [LARGE SCALE GENOMIC DNA]</scope>
    <source>
        <strain>ATCC MYA-4892 / CBS 513.88 / FGSC A1513</strain>
    </source>
</reference>
<sequence>MFRAQQNAFDDAVAKATDENLTSENWEYILDVCDKVGAEESGAKDAVAAMIKRLAHRNANVQLYTLELANALAQNCGPKIHRELASRSFTDALLRLANDRNTHQQVKSKILERMQEWTEMFASNPDFGIMEQAYMKLKTQNPNLQPPSKPGKREITDADRQKEEEELQMALALSIREKATIAPAPQAEASSSAAPVNQTQAPAATSQAVPSGTSAATVSRVRALFDFQPSEPGELQFRKGDVIAVLESVYKDWWKGSLRGQTGIFPLNYVEKLPDPTVEELQREAQMEADVFGQIKNVEKLLTLLSTRSSELNVQDNEEITALYHSTLAIRPKLIELIGKYSQKKDEFTQLNEKFIKARRDYESLLEASMAHPAQSQYGRPAQPPYGYPGAAPVGYPQGPPQADPQRYFSPRPQETQAPPANAPAFYGTEQAHAYPPTSQSPDPRQTPPAGAPYQQPQPQQQRQPSSESYQPVYHRPESTYENPQELGTSVYDSPVEHPASQRPPYPGAVQVPAAVQQHFQQQQQQPQQQSQQPHPEYPASGYTPEDASRPPAHQAQPPYPSHQPPPMHQPPPVPGTSTTPTPYPALNAGGGYQAYNPSQTDVSNPASFYR</sequence>